<accession>A2Y3B5</accession>
<accession>P49083</accession>
<accession>Q2HNY6</accession>
<accession>Q43604</accession>
<accession>Q5KQF9</accession>
<accession>Q5W732</accession>
<dbReference type="EMBL" id="L28001">
    <property type="protein sequence ID" value="AAC41657.1"/>
    <property type="molecule type" value="mRNA"/>
</dbReference>
<dbReference type="EMBL" id="L35844">
    <property type="protein sequence ID" value="AAA98738.1"/>
    <property type="status" value="ALT_SEQ"/>
    <property type="molecule type" value="Genomic_DNA"/>
</dbReference>
<dbReference type="EMBL" id="CM000130">
    <property type="status" value="NOT_ANNOTATED_CDS"/>
    <property type="molecule type" value="Genomic_DNA"/>
</dbReference>
<dbReference type="EMBL" id="AY792541">
    <property type="protein sequence ID" value="AAX54917.1"/>
    <property type="molecule type" value="Genomic_DNA"/>
</dbReference>
<dbReference type="PIR" id="S56670">
    <property type="entry name" value="S56670"/>
</dbReference>
<dbReference type="PIR" id="T03980">
    <property type="entry name" value="T03980"/>
</dbReference>
<dbReference type="PDB" id="8VGB">
    <property type="method" value="X-ray"/>
    <property type="resolution" value="2.99 A"/>
    <property type="chains" value="A/B/C/D=1-380"/>
</dbReference>
<dbReference type="PDBsum" id="8VGB"/>
<dbReference type="SMR" id="A2Y3B5"/>
<dbReference type="STRING" id="39946.A2Y3B5"/>
<dbReference type="HOGENOM" id="CLU_014184_4_0_1"/>
<dbReference type="Proteomes" id="UP000007015">
    <property type="component" value="Chromosome 5"/>
</dbReference>
<dbReference type="GO" id="GO:0005737">
    <property type="term" value="C:cytoplasm"/>
    <property type="evidence" value="ECO:0007669"/>
    <property type="project" value="TreeGrafter"/>
</dbReference>
<dbReference type="GO" id="GO:0005834">
    <property type="term" value="C:heterotrimeric G-protein complex"/>
    <property type="evidence" value="ECO:0007669"/>
    <property type="project" value="InterPro"/>
</dbReference>
<dbReference type="GO" id="GO:0001664">
    <property type="term" value="F:G protein-coupled receptor binding"/>
    <property type="evidence" value="ECO:0007669"/>
    <property type="project" value="InterPro"/>
</dbReference>
<dbReference type="GO" id="GO:0031683">
    <property type="term" value="F:G-protein beta/gamma-subunit complex binding"/>
    <property type="evidence" value="ECO:0007669"/>
    <property type="project" value="InterPro"/>
</dbReference>
<dbReference type="GO" id="GO:0005525">
    <property type="term" value="F:GTP binding"/>
    <property type="evidence" value="ECO:0007669"/>
    <property type="project" value="UniProtKB-KW"/>
</dbReference>
<dbReference type="GO" id="GO:0003924">
    <property type="term" value="F:GTPase activity"/>
    <property type="evidence" value="ECO:0007669"/>
    <property type="project" value="InterPro"/>
</dbReference>
<dbReference type="GO" id="GO:0046872">
    <property type="term" value="F:metal ion binding"/>
    <property type="evidence" value="ECO:0007669"/>
    <property type="project" value="UniProtKB-KW"/>
</dbReference>
<dbReference type="GO" id="GO:0007188">
    <property type="term" value="P:adenylate cyclase-modulating G protein-coupled receptor signaling pathway"/>
    <property type="evidence" value="ECO:0007669"/>
    <property type="project" value="InterPro"/>
</dbReference>
<dbReference type="GO" id="GO:0006952">
    <property type="term" value="P:defense response"/>
    <property type="evidence" value="ECO:0007669"/>
    <property type="project" value="UniProtKB-KW"/>
</dbReference>
<dbReference type="CDD" id="cd00066">
    <property type="entry name" value="G-alpha"/>
    <property type="match status" value="1"/>
</dbReference>
<dbReference type="FunFam" id="1.10.400.10:FF:000008">
    <property type="entry name" value="Guanine nucleotide-binding protein alpha-1 subunit"/>
    <property type="match status" value="1"/>
</dbReference>
<dbReference type="FunFam" id="3.40.50.300:FF:000733">
    <property type="entry name" value="Guanine nucleotide-binding protein alpha-1 subunit"/>
    <property type="match status" value="1"/>
</dbReference>
<dbReference type="Gene3D" id="1.10.400.10">
    <property type="entry name" value="GI Alpha 1, domain 2-like"/>
    <property type="match status" value="1"/>
</dbReference>
<dbReference type="Gene3D" id="3.40.50.300">
    <property type="entry name" value="P-loop containing nucleotide triphosphate hydrolases"/>
    <property type="match status" value="1"/>
</dbReference>
<dbReference type="InterPro" id="IPR001019">
    <property type="entry name" value="Gprotein_alpha_su"/>
</dbReference>
<dbReference type="InterPro" id="IPR011025">
    <property type="entry name" value="GproteinA_insert"/>
</dbReference>
<dbReference type="InterPro" id="IPR027417">
    <property type="entry name" value="P-loop_NTPase"/>
</dbReference>
<dbReference type="InterPro" id="IPR002976">
    <property type="entry name" value="Plant_Gprotein_alpha"/>
</dbReference>
<dbReference type="PANTHER" id="PTHR10218">
    <property type="entry name" value="GTP-BINDING PROTEIN ALPHA SUBUNIT"/>
    <property type="match status" value="1"/>
</dbReference>
<dbReference type="PANTHER" id="PTHR10218:SF302">
    <property type="entry name" value="GUANINE NUCLEOTIDE-BINDING PROTEIN ALPHA-5 SUBUNIT"/>
    <property type="match status" value="1"/>
</dbReference>
<dbReference type="Pfam" id="PF00503">
    <property type="entry name" value="G-alpha"/>
    <property type="match status" value="1"/>
</dbReference>
<dbReference type="PRINTS" id="PR00318">
    <property type="entry name" value="GPROTEINA"/>
</dbReference>
<dbReference type="PRINTS" id="PR01242">
    <property type="entry name" value="GPROTEINAPLT"/>
</dbReference>
<dbReference type="SMART" id="SM00275">
    <property type="entry name" value="G_alpha"/>
    <property type="match status" value="1"/>
</dbReference>
<dbReference type="SUPFAM" id="SSF52540">
    <property type="entry name" value="P-loop containing nucleoside triphosphate hydrolases"/>
    <property type="match status" value="1"/>
</dbReference>
<dbReference type="SUPFAM" id="SSF47895">
    <property type="entry name" value="Transducin (alpha subunit), insertion domain"/>
    <property type="match status" value="1"/>
</dbReference>
<dbReference type="PROSITE" id="PS51882">
    <property type="entry name" value="G_ALPHA"/>
    <property type="match status" value="1"/>
</dbReference>
<gene>
    <name type="primary">GPA1</name>
    <name type="synonym">D1</name>
    <name type="synonym">GA1</name>
    <name type="synonym">RGA1</name>
    <name type="ORF">OsI_018808</name>
</gene>
<feature type="initiator methionine" description="Removed" evidence="1">
    <location>
        <position position="1"/>
    </location>
</feature>
<feature type="chain" id="PRO_0000295659" description="Guanine nucleotide-binding protein alpha-1 subunit">
    <location>
        <begin position="2"/>
        <end position="380"/>
    </location>
</feature>
<feature type="domain" description="G-alpha" evidence="4">
    <location>
        <begin position="38"/>
        <end position="380"/>
    </location>
</feature>
<feature type="region of interest" description="Disordered" evidence="5">
    <location>
        <begin position="1"/>
        <end position="25"/>
    </location>
</feature>
<feature type="region of interest" description="G1 motif" evidence="4">
    <location>
        <begin position="41"/>
        <end position="54"/>
    </location>
</feature>
<feature type="region of interest" description="G2 motif" evidence="4">
    <location>
        <begin position="186"/>
        <end position="194"/>
    </location>
</feature>
<feature type="region of interest" description="G3 motif" evidence="4">
    <location>
        <begin position="215"/>
        <end position="224"/>
    </location>
</feature>
<feature type="region of interest" description="G4 motif" evidence="4">
    <location>
        <begin position="284"/>
        <end position="291"/>
    </location>
</feature>
<feature type="region of interest" description="G5 motif" evidence="4">
    <location>
        <begin position="354"/>
        <end position="359"/>
    </location>
</feature>
<feature type="compositionally biased region" description="Basic and acidic residues" evidence="5">
    <location>
        <begin position="10"/>
        <end position="25"/>
    </location>
</feature>
<feature type="binding site" evidence="2">
    <location>
        <position position="49"/>
    </location>
    <ligand>
        <name>GTP</name>
        <dbReference type="ChEBI" id="CHEBI:37565"/>
    </ligand>
</feature>
<feature type="binding site" evidence="2">
    <location>
        <position position="50"/>
    </location>
    <ligand>
        <name>GTP</name>
        <dbReference type="ChEBI" id="CHEBI:37565"/>
    </ligand>
</feature>
<feature type="binding site" evidence="2">
    <location>
        <position position="51"/>
    </location>
    <ligand>
        <name>GTP</name>
        <dbReference type="ChEBI" id="CHEBI:37565"/>
    </ligand>
</feature>
<feature type="binding site" evidence="2">
    <location>
        <position position="52"/>
    </location>
    <ligand>
        <name>GTP</name>
        <dbReference type="ChEBI" id="CHEBI:37565"/>
    </ligand>
</feature>
<feature type="binding site" evidence="2">
    <location>
        <position position="53"/>
    </location>
    <ligand>
        <name>GTP</name>
        <dbReference type="ChEBI" id="CHEBI:37565"/>
    </ligand>
</feature>
<feature type="binding site" evidence="2">
    <location>
        <position position="53"/>
    </location>
    <ligand>
        <name>Mg(2+)</name>
        <dbReference type="ChEBI" id="CHEBI:18420"/>
    </ligand>
</feature>
<feature type="binding site" evidence="2">
    <location>
        <position position="54"/>
    </location>
    <ligand>
        <name>GTP</name>
        <dbReference type="ChEBI" id="CHEBI:37565"/>
    </ligand>
</feature>
<feature type="binding site" evidence="2">
    <location>
        <position position="163"/>
    </location>
    <ligand>
        <name>GTP</name>
        <dbReference type="ChEBI" id="CHEBI:37565"/>
    </ligand>
</feature>
<feature type="binding site" evidence="2">
    <location>
        <position position="188"/>
    </location>
    <ligand>
        <name>GTP</name>
        <dbReference type="ChEBI" id="CHEBI:37565"/>
    </ligand>
</feature>
<feature type="binding site" evidence="2">
    <location>
        <position position="189"/>
    </location>
    <ligand>
        <name>GTP</name>
        <dbReference type="ChEBI" id="CHEBI:37565"/>
    </ligand>
</feature>
<feature type="binding site" evidence="2">
    <location>
        <position position="194"/>
    </location>
    <ligand>
        <name>GTP</name>
        <dbReference type="ChEBI" id="CHEBI:37565"/>
    </ligand>
</feature>
<feature type="binding site" evidence="2">
    <location>
        <position position="194"/>
    </location>
    <ligand>
        <name>Mg(2+)</name>
        <dbReference type="ChEBI" id="CHEBI:18420"/>
    </ligand>
</feature>
<feature type="binding site" evidence="2">
    <location>
        <position position="222"/>
    </location>
    <ligand>
        <name>GTP</name>
        <dbReference type="ChEBI" id="CHEBI:37565"/>
    </ligand>
</feature>
<feature type="binding site" evidence="2">
    <location>
        <position position="288"/>
    </location>
    <ligand>
        <name>GTP</name>
        <dbReference type="ChEBI" id="CHEBI:37565"/>
    </ligand>
</feature>
<feature type="binding site" evidence="2">
    <location>
        <position position="289"/>
    </location>
    <ligand>
        <name>GTP</name>
        <dbReference type="ChEBI" id="CHEBI:37565"/>
    </ligand>
</feature>
<feature type="binding site" evidence="2">
    <location>
        <position position="291"/>
    </location>
    <ligand>
        <name>GTP</name>
        <dbReference type="ChEBI" id="CHEBI:37565"/>
    </ligand>
</feature>
<feature type="binding site" evidence="2">
    <location>
        <position position="356"/>
    </location>
    <ligand>
        <name>GTP</name>
        <dbReference type="ChEBI" id="CHEBI:37565"/>
    </ligand>
</feature>
<feature type="lipid moiety-binding region" description="N-myristoyl glycine" evidence="2">
    <location>
        <position position="2"/>
    </location>
</feature>
<feature type="lipid moiety-binding region" description="S-palmitoyl cysteine" evidence="2">
    <location>
        <position position="5"/>
    </location>
</feature>
<feature type="sequence conflict" description="In Ref. 1; AAA98738." evidence="6" ref="1">
    <original>G</original>
    <variation>A</variation>
    <location>
        <position position="48"/>
    </location>
</feature>
<feature type="sequence conflict" description="In Ref. 1; AAA98738." evidence="6" ref="1">
    <original>A</original>
    <variation>V</variation>
    <location>
        <position position="148"/>
    </location>
</feature>
<feature type="sequence conflict" description="In Ref. 1; AAA98738/AAC41657." evidence="6" ref="1">
    <original>D</original>
    <variation>V</variation>
    <location>
        <position position="173"/>
    </location>
</feature>
<feature type="sequence conflict" description="In Ref. 1; AAA98738/AAC41657." evidence="6" ref="1">
    <original>F</original>
    <variation>C</variation>
    <location>
        <position position="293"/>
    </location>
</feature>
<sequence length="380" mass="44206">MGSSCSRSHSLSEAETTKNAKSADIDRRILQETKAEQHIHKLLLLGAGESGKSTIFKQIKLLFQTGFDEAELRSYTSVIHANVYQTIKILYEGAKELSQVESDSSKYVISPDNQEIGEKLSDIDGRLDYPLLNKELVLDVKRLWQDPAIQETYLRGSILQLPDCAQYFMENLDRLAEAGYVPTKEDVLYARVRTNGVVQIQFSPVGENKRGGEVYRLYDVGGQRNERRKWIHLFEGVNAVIFCAAISEYDQMLFEDETKNRMMETKELFDWVLKQRCFEKTSFILFLNKFDIFEKKIQKVPLSVCEWFKDYQPIAPGKQEVEHAYEFVKKKFEELYFQSSKPDRVDRVFKIYRTTALDQKLVKKTFKLIDESMRRSREGT</sequence>
<keyword id="KW-0002">3D-structure</keyword>
<keyword id="KW-1003">Cell membrane</keyword>
<keyword id="KW-0342">GTP-binding</keyword>
<keyword id="KW-0378">Hydrolase</keyword>
<keyword id="KW-0449">Lipoprotein</keyword>
<keyword id="KW-0460">Magnesium</keyword>
<keyword id="KW-0472">Membrane</keyword>
<keyword id="KW-0479">Metal-binding</keyword>
<keyword id="KW-0519">Myristate</keyword>
<keyword id="KW-0547">Nucleotide-binding</keyword>
<keyword id="KW-0564">Palmitate</keyword>
<keyword id="KW-0611">Plant defense</keyword>
<keyword id="KW-1185">Reference proteome</keyword>
<keyword id="KW-0807">Transducer</keyword>
<name>GPA1_ORYSI</name>
<evidence type="ECO:0000250" key="1"/>
<evidence type="ECO:0000250" key="2">
    <source>
        <dbReference type="UniProtKB" id="P18064"/>
    </source>
</evidence>
<evidence type="ECO:0000250" key="3">
    <source>
        <dbReference type="UniProtKB" id="Q0DJ33"/>
    </source>
</evidence>
<evidence type="ECO:0000255" key="4">
    <source>
        <dbReference type="PROSITE-ProRule" id="PRU01230"/>
    </source>
</evidence>
<evidence type="ECO:0000256" key="5">
    <source>
        <dbReference type="SAM" id="MobiDB-lite"/>
    </source>
</evidence>
<evidence type="ECO:0000305" key="6"/>
<proteinExistence type="evidence at protein level"/>
<reference key="1">
    <citation type="journal article" date="1995" name="Plant Mol. Biol.">
        <title>Molecular cloning and characterization of RGA1 encoding a G protein alpha subunit from rice (Oryza sativa L. IR-36).</title>
        <authorList>
            <person name="Seo H.S."/>
            <person name="Kim H.Y."/>
            <person name="Lee S.Y."/>
            <person name="Bahk J.D."/>
            <person name="Cho M.J."/>
        </authorList>
    </citation>
    <scope>NUCLEOTIDE SEQUENCE [GENOMIC DNA / MRNA]</scope>
    <source>
        <strain>cv. IR36</strain>
        <tissue>Coleoptile</tissue>
    </source>
</reference>
<reference key="2">
    <citation type="journal article" date="2005" name="PLoS Biol.">
        <title>The genomes of Oryza sativa: a history of duplications.</title>
        <authorList>
            <person name="Yu J."/>
            <person name="Wang J."/>
            <person name="Lin W."/>
            <person name="Li S."/>
            <person name="Li H."/>
            <person name="Zhou J."/>
            <person name="Ni P."/>
            <person name="Dong W."/>
            <person name="Hu S."/>
            <person name="Zeng C."/>
            <person name="Zhang J."/>
            <person name="Zhang Y."/>
            <person name="Li R."/>
            <person name="Xu Z."/>
            <person name="Li S."/>
            <person name="Li X."/>
            <person name="Zheng H."/>
            <person name="Cong L."/>
            <person name="Lin L."/>
            <person name="Yin J."/>
            <person name="Geng J."/>
            <person name="Li G."/>
            <person name="Shi J."/>
            <person name="Liu J."/>
            <person name="Lv H."/>
            <person name="Li J."/>
            <person name="Wang J."/>
            <person name="Deng Y."/>
            <person name="Ran L."/>
            <person name="Shi X."/>
            <person name="Wang X."/>
            <person name="Wu Q."/>
            <person name="Li C."/>
            <person name="Ren X."/>
            <person name="Wang J."/>
            <person name="Wang X."/>
            <person name="Li D."/>
            <person name="Liu D."/>
            <person name="Zhang X."/>
            <person name="Ji Z."/>
            <person name="Zhao W."/>
            <person name="Sun Y."/>
            <person name="Zhang Z."/>
            <person name="Bao J."/>
            <person name="Han Y."/>
            <person name="Dong L."/>
            <person name="Ji J."/>
            <person name="Chen P."/>
            <person name="Wu S."/>
            <person name="Liu J."/>
            <person name="Xiao Y."/>
            <person name="Bu D."/>
            <person name="Tan J."/>
            <person name="Yang L."/>
            <person name="Ye C."/>
            <person name="Zhang J."/>
            <person name="Xu J."/>
            <person name="Zhou Y."/>
            <person name="Yu Y."/>
            <person name="Zhang B."/>
            <person name="Zhuang S."/>
            <person name="Wei H."/>
            <person name="Liu B."/>
            <person name="Lei M."/>
            <person name="Yu H."/>
            <person name="Li Y."/>
            <person name="Xu H."/>
            <person name="Wei S."/>
            <person name="He X."/>
            <person name="Fang L."/>
            <person name="Zhang Z."/>
            <person name="Zhang Y."/>
            <person name="Huang X."/>
            <person name="Su Z."/>
            <person name="Tong W."/>
            <person name="Li J."/>
            <person name="Tong Z."/>
            <person name="Li S."/>
            <person name="Ye J."/>
            <person name="Wang L."/>
            <person name="Fang L."/>
            <person name="Lei T."/>
            <person name="Chen C.-S."/>
            <person name="Chen H.-C."/>
            <person name="Xu Z."/>
            <person name="Li H."/>
            <person name="Huang H."/>
            <person name="Zhang F."/>
            <person name="Xu H."/>
            <person name="Li N."/>
            <person name="Zhao C."/>
            <person name="Li S."/>
            <person name="Dong L."/>
            <person name="Huang Y."/>
            <person name="Li L."/>
            <person name="Xi Y."/>
            <person name="Qi Q."/>
            <person name="Li W."/>
            <person name="Zhang B."/>
            <person name="Hu W."/>
            <person name="Zhang Y."/>
            <person name="Tian X."/>
            <person name="Jiao Y."/>
            <person name="Liang X."/>
            <person name="Jin J."/>
            <person name="Gao L."/>
            <person name="Zheng W."/>
            <person name="Hao B."/>
            <person name="Liu S.-M."/>
            <person name="Wang W."/>
            <person name="Yuan L."/>
            <person name="Cao M."/>
            <person name="McDermott J."/>
            <person name="Samudrala R."/>
            <person name="Wang J."/>
            <person name="Wong G.K.-S."/>
            <person name="Yang H."/>
        </authorList>
    </citation>
    <scope>NUCLEOTIDE SEQUENCE [LARGE SCALE GENOMIC DNA]</scope>
    <source>
        <strain>cv. 93-11</strain>
    </source>
</reference>
<reference key="3">
    <citation type="journal article" date="2005" name="Am. J. Bot.">
        <title>Molecular phylogeny of Oryzeae (Poaceae) based on DNA sequences from chloroplast, mitochondrial, and nuclear genomes.</title>
        <authorList>
            <person name="Guo Y.L."/>
            <person name="Ge S."/>
        </authorList>
        <dbReference type="AGRICOLA" id="IND43738818"/>
    </citation>
    <scope>NUCLEOTIDE SEQUENCE [GENOMIC DNA] OF 204-325</scope>
</reference>
<protein>
    <recommendedName>
        <fullName>Guanine nucleotide-binding protein alpha-1 subunit</fullName>
        <shortName>GP-alpha-1</shortName>
    </recommendedName>
    <alternativeName>
        <fullName>Protein Dwarf1</fullName>
    </alternativeName>
</protein>
<comment type="function">
    <text evidence="3">Guanine nucleotide-binding proteins (G proteins) are involved as modulators or transducers in various transmembrane signaling systems. May function in a signal transduction pathway required for normal growth and development of internodes, leaves, panicles and seeds. Involved in gibberellin signal transduction. Involved in R gene-mediated disease resistance. Functions upstream of the small GTPase RAC1 in the early steps of signaling. Involved in brassinosteroid response. May not be a signaling molecule in BRI1-mediated perception or transduction.</text>
</comment>
<comment type="cofactor">
    <cofactor evidence="2">
        <name>Mg(2+)</name>
        <dbReference type="ChEBI" id="CHEBI:18420"/>
    </cofactor>
</comment>
<comment type="subunit">
    <text evidence="3">G proteins are composed of 3 units; alpha, beta and gamma. The alpha chain contains the guanine nucleotide binding site. Interacts with COLD1.</text>
</comment>
<comment type="subcellular location">
    <subcellularLocation>
        <location evidence="3">Cell membrane</location>
    </subcellularLocation>
</comment>
<comment type="domain">
    <text evidence="1">The helical domain (69-189) is required for self-activation.</text>
</comment>
<comment type="similarity">
    <text evidence="6">Belongs to the G-alpha family.</text>
</comment>
<comment type="sequence caution" evidence="6">
    <conflict type="erroneous gene model prediction">
        <sequence resource="EMBL-CDS" id="AAA98738"/>
    </conflict>
</comment>
<organism>
    <name type="scientific">Oryza sativa subsp. indica</name>
    <name type="common">Rice</name>
    <dbReference type="NCBI Taxonomy" id="39946"/>
    <lineage>
        <taxon>Eukaryota</taxon>
        <taxon>Viridiplantae</taxon>
        <taxon>Streptophyta</taxon>
        <taxon>Embryophyta</taxon>
        <taxon>Tracheophyta</taxon>
        <taxon>Spermatophyta</taxon>
        <taxon>Magnoliopsida</taxon>
        <taxon>Liliopsida</taxon>
        <taxon>Poales</taxon>
        <taxon>Poaceae</taxon>
        <taxon>BOP clade</taxon>
        <taxon>Oryzoideae</taxon>
        <taxon>Oryzeae</taxon>
        <taxon>Oryzinae</taxon>
        <taxon>Oryza</taxon>
        <taxon>Oryza sativa</taxon>
    </lineage>
</organism>